<keyword id="KW-1003">Cell membrane</keyword>
<keyword id="KW-1015">Disulfide bond</keyword>
<keyword id="KW-0325">Glycoprotein</keyword>
<keyword id="KW-0336">GPI-anchor</keyword>
<keyword id="KW-0449">Lipoprotein</keyword>
<keyword id="KW-0472">Membrane</keyword>
<keyword id="KW-1185">Reference proteome</keyword>
<keyword id="KW-0732">Signal</keyword>
<accession>F4K6R7</accession>
<accession>Q9LY94</accession>
<proteinExistence type="evidence at transcript level"/>
<gene>
    <name evidence="5" type="primary">ENODL21</name>
    <name evidence="5" type="synonym">EN21</name>
    <name evidence="8" type="ordered locus">At5g14345</name>
    <name evidence="9" type="ORF">F18O22_140</name>
</gene>
<dbReference type="EMBL" id="FJ587306">
    <property type="protein sequence ID" value="ACL93307.1"/>
    <property type="molecule type" value="mRNA"/>
</dbReference>
<dbReference type="EMBL" id="AL163817">
    <property type="protein sequence ID" value="CAB87774.1"/>
    <property type="status" value="ALT_SEQ"/>
    <property type="molecule type" value="Genomic_DNA"/>
</dbReference>
<dbReference type="EMBL" id="CP002688">
    <property type="protein sequence ID" value="AED92020.1"/>
    <property type="molecule type" value="Genomic_DNA"/>
</dbReference>
<dbReference type="PIR" id="T48608">
    <property type="entry name" value="T48608"/>
</dbReference>
<dbReference type="RefSeq" id="NP_001078582.1">
    <property type="nucleotide sequence ID" value="NM_001085113.2"/>
</dbReference>
<dbReference type="SMR" id="F4K6R7"/>
<dbReference type="STRING" id="3702.F4K6R7"/>
<dbReference type="GlyGen" id="F4K6R7">
    <property type="glycosylation" value="2 sites"/>
</dbReference>
<dbReference type="PaxDb" id="3702-AT5G14345.1"/>
<dbReference type="ProteomicsDB" id="218057"/>
<dbReference type="EnsemblPlants" id="AT5G14345.1">
    <property type="protein sequence ID" value="AT5G14345.1"/>
    <property type="gene ID" value="AT5G14345"/>
</dbReference>
<dbReference type="GeneID" id="5008209"/>
<dbReference type="Gramene" id="AT5G14345.1">
    <property type="protein sequence ID" value="AT5G14345.1"/>
    <property type="gene ID" value="AT5G14345"/>
</dbReference>
<dbReference type="KEGG" id="ath:AT5G14345"/>
<dbReference type="Araport" id="AT5G14345"/>
<dbReference type="TAIR" id="AT5G14345">
    <property type="gene designation" value="ENODL21"/>
</dbReference>
<dbReference type="eggNOG" id="ENOG502S114">
    <property type="taxonomic scope" value="Eukaryota"/>
</dbReference>
<dbReference type="HOGENOM" id="CLU_058719_1_3_1"/>
<dbReference type="InParanoid" id="F4K6R7"/>
<dbReference type="OMA" id="ASAMRFK"/>
<dbReference type="OrthoDB" id="959565at2759"/>
<dbReference type="PRO" id="PR:F4K6R7"/>
<dbReference type="Proteomes" id="UP000006548">
    <property type="component" value="Chromosome 5"/>
</dbReference>
<dbReference type="ExpressionAtlas" id="F4K6R7">
    <property type="expression patterns" value="baseline and differential"/>
</dbReference>
<dbReference type="GO" id="GO:0005886">
    <property type="term" value="C:plasma membrane"/>
    <property type="evidence" value="ECO:0007669"/>
    <property type="project" value="UniProtKB-SubCell"/>
</dbReference>
<dbReference type="GO" id="GO:0098552">
    <property type="term" value="C:side of membrane"/>
    <property type="evidence" value="ECO:0007669"/>
    <property type="project" value="UniProtKB-KW"/>
</dbReference>
<dbReference type="GO" id="GO:0009055">
    <property type="term" value="F:electron transfer activity"/>
    <property type="evidence" value="ECO:0007669"/>
    <property type="project" value="InterPro"/>
</dbReference>
<dbReference type="FunFam" id="2.60.40.420:FF:000010">
    <property type="entry name" value="Early nodulin-like protein 1"/>
    <property type="match status" value="1"/>
</dbReference>
<dbReference type="Gene3D" id="2.60.40.420">
    <property type="entry name" value="Cupredoxins - blue copper proteins"/>
    <property type="match status" value="1"/>
</dbReference>
<dbReference type="InterPro" id="IPR008972">
    <property type="entry name" value="Cupredoxin"/>
</dbReference>
<dbReference type="InterPro" id="IPR039391">
    <property type="entry name" value="Phytocyanin-like"/>
</dbReference>
<dbReference type="InterPro" id="IPR003245">
    <property type="entry name" value="Phytocyanin_dom"/>
</dbReference>
<dbReference type="PANTHER" id="PTHR33021">
    <property type="entry name" value="BLUE COPPER PROTEIN"/>
    <property type="match status" value="1"/>
</dbReference>
<dbReference type="PANTHER" id="PTHR33021:SF49">
    <property type="entry name" value="EARLY NODULIN-LIKE PROTEIN 21"/>
    <property type="match status" value="1"/>
</dbReference>
<dbReference type="Pfam" id="PF02298">
    <property type="entry name" value="Cu_bind_like"/>
    <property type="match status" value="1"/>
</dbReference>
<dbReference type="SUPFAM" id="SSF49503">
    <property type="entry name" value="Cupredoxins"/>
    <property type="match status" value="1"/>
</dbReference>
<dbReference type="PROSITE" id="PS51485">
    <property type="entry name" value="PHYTOCYANIN"/>
    <property type="match status" value="1"/>
</dbReference>
<comment type="function">
    <text evidence="6">May act as a carbohydrate transporter.</text>
</comment>
<comment type="subcellular location">
    <subcellularLocation>
        <location evidence="1">Cell membrane</location>
        <topology evidence="1">Lipid-anchor</topology>
        <topology evidence="1">GPI-anchor</topology>
    </subcellularLocation>
</comment>
<comment type="tissue specificity">
    <text evidence="4">Mostly expressed in leaves and flowers, and, to a lower extent, in roots and stems, but barely in seedlings and seeds.</text>
</comment>
<comment type="similarity">
    <text evidence="7">Belongs to the early nodulin-like (ENODL) family.</text>
</comment>
<comment type="sequence caution" evidence="7">
    <conflict type="erroneous gene model prediction">
        <sequence resource="EMBL-CDS" id="CAB87774"/>
    </conflict>
</comment>
<evidence type="ECO:0000255" key="1"/>
<evidence type="ECO:0000255" key="2">
    <source>
        <dbReference type="PROSITE-ProRule" id="PRU00498"/>
    </source>
</evidence>
<evidence type="ECO:0000255" key="3">
    <source>
        <dbReference type="PROSITE-ProRule" id="PRU00818"/>
    </source>
</evidence>
<evidence type="ECO:0000269" key="4">
    <source>
    </source>
</evidence>
<evidence type="ECO:0000303" key="5">
    <source>
    </source>
</evidence>
<evidence type="ECO:0000303" key="6">
    <source>
    </source>
</evidence>
<evidence type="ECO:0000305" key="7"/>
<evidence type="ECO:0000312" key="8">
    <source>
        <dbReference type="Araport" id="AT5G14345"/>
    </source>
</evidence>
<evidence type="ECO:0000312" key="9">
    <source>
        <dbReference type="EMBL" id="CAB87774.1"/>
    </source>
</evidence>
<name>ENL21_ARATH</name>
<sequence>MFLWLVIVLTISASVSSYEHKLNWVVPPANSSESFNDWASNKRFQVGDIIQFKYKKDSVMQVTKESYKQCNSSHPRFYSNTGKTRFMFDHSVPYYFISGTSGHCEKGQKMIVEVISRDHTTTSAAPPAAFAVLLCFFSLSLYFVA</sequence>
<organism>
    <name type="scientific">Arabidopsis thaliana</name>
    <name type="common">Mouse-ear cress</name>
    <dbReference type="NCBI Taxonomy" id="3702"/>
    <lineage>
        <taxon>Eukaryota</taxon>
        <taxon>Viridiplantae</taxon>
        <taxon>Streptophyta</taxon>
        <taxon>Embryophyta</taxon>
        <taxon>Tracheophyta</taxon>
        <taxon>Spermatophyta</taxon>
        <taxon>Magnoliopsida</taxon>
        <taxon>eudicotyledons</taxon>
        <taxon>Gunneridae</taxon>
        <taxon>Pentapetalae</taxon>
        <taxon>rosids</taxon>
        <taxon>malvids</taxon>
        <taxon>Brassicales</taxon>
        <taxon>Brassicaceae</taxon>
        <taxon>Camelineae</taxon>
        <taxon>Arabidopsis</taxon>
    </lineage>
</organism>
<protein>
    <recommendedName>
        <fullName evidence="5">Early nodulin-like protein 21</fullName>
        <shortName evidence="5">AtENODL21</shortName>
    </recommendedName>
    <alternativeName>
        <fullName evidence="7">Phytocyanin-like protein ENODL21</fullName>
    </alternativeName>
</protein>
<reference key="1">
    <citation type="journal article" date="2009" name="Biosci. Biotechnol. Biochem.">
        <title>Genome-wide identification, structure and expression studies, and mutant collection of 22 early nodulin-like protein genes in Arabidopsis.</title>
        <authorList>
            <person name="Mashiguchi K."/>
            <person name="Asami T."/>
            <person name="Suzuki Y."/>
        </authorList>
    </citation>
    <scope>NUCLEOTIDE SEQUENCE [MRNA]</scope>
    <scope>TISSUE SPECIFICITY</scope>
    <scope>GENE FAMILY</scope>
    <scope>NOMENCLATURE</scope>
    <source>
        <strain>cv. Columbia</strain>
    </source>
</reference>
<reference key="2">
    <citation type="journal article" date="2000" name="Nature">
        <title>Sequence and analysis of chromosome 5 of the plant Arabidopsis thaliana.</title>
        <authorList>
            <person name="Tabata S."/>
            <person name="Kaneko T."/>
            <person name="Nakamura Y."/>
            <person name="Kotani H."/>
            <person name="Kato T."/>
            <person name="Asamizu E."/>
            <person name="Miyajima N."/>
            <person name="Sasamoto S."/>
            <person name="Kimura T."/>
            <person name="Hosouchi T."/>
            <person name="Kawashima K."/>
            <person name="Kohara M."/>
            <person name="Matsumoto M."/>
            <person name="Matsuno A."/>
            <person name="Muraki A."/>
            <person name="Nakayama S."/>
            <person name="Nakazaki N."/>
            <person name="Naruo K."/>
            <person name="Okumura S."/>
            <person name="Shinpo S."/>
            <person name="Takeuchi C."/>
            <person name="Wada T."/>
            <person name="Watanabe A."/>
            <person name="Yamada M."/>
            <person name="Yasuda M."/>
            <person name="Sato S."/>
            <person name="de la Bastide M."/>
            <person name="Huang E."/>
            <person name="Spiegel L."/>
            <person name="Gnoj L."/>
            <person name="O'Shaughnessy A."/>
            <person name="Preston R."/>
            <person name="Habermann K."/>
            <person name="Murray J."/>
            <person name="Johnson D."/>
            <person name="Rohlfing T."/>
            <person name="Nelson J."/>
            <person name="Stoneking T."/>
            <person name="Pepin K."/>
            <person name="Spieth J."/>
            <person name="Sekhon M."/>
            <person name="Armstrong J."/>
            <person name="Becker M."/>
            <person name="Belter E."/>
            <person name="Cordum H."/>
            <person name="Cordes M."/>
            <person name="Courtney L."/>
            <person name="Courtney W."/>
            <person name="Dante M."/>
            <person name="Du H."/>
            <person name="Edwards J."/>
            <person name="Fryman J."/>
            <person name="Haakensen B."/>
            <person name="Lamar E."/>
            <person name="Latreille P."/>
            <person name="Leonard S."/>
            <person name="Meyer R."/>
            <person name="Mulvaney E."/>
            <person name="Ozersky P."/>
            <person name="Riley A."/>
            <person name="Strowmatt C."/>
            <person name="Wagner-McPherson C."/>
            <person name="Wollam A."/>
            <person name="Yoakum M."/>
            <person name="Bell M."/>
            <person name="Dedhia N."/>
            <person name="Parnell L."/>
            <person name="Shah R."/>
            <person name="Rodriguez M."/>
            <person name="Hoon See L."/>
            <person name="Vil D."/>
            <person name="Baker J."/>
            <person name="Kirchoff K."/>
            <person name="Toth K."/>
            <person name="King L."/>
            <person name="Bahret A."/>
            <person name="Miller B."/>
            <person name="Marra M.A."/>
            <person name="Martienssen R."/>
            <person name="McCombie W.R."/>
            <person name="Wilson R.K."/>
            <person name="Murphy G."/>
            <person name="Bancroft I."/>
            <person name="Volckaert G."/>
            <person name="Wambutt R."/>
            <person name="Duesterhoeft A."/>
            <person name="Stiekema W."/>
            <person name="Pohl T."/>
            <person name="Entian K.-D."/>
            <person name="Terryn N."/>
            <person name="Hartley N."/>
            <person name="Bent E."/>
            <person name="Johnson S."/>
            <person name="Langham S.-A."/>
            <person name="McCullagh B."/>
            <person name="Robben J."/>
            <person name="Grymonprez B."/>
            <person name="Zimmermann W."/>
            <person name="Ramsperger U."/>
            <person name="Wedler H."/>
            <person name="Balke K."/>
            <person name="Wedler E."/>
            <person name="Peters S."/>
            <person name="van Staveren M."/>
            <person name="Dirkse W."/>
            <person name="Mooijman P."/>
            <person name="Klein Lankhorst R."/>
            <person name="Weitzenegger T."/>
            <person name="Bothe G."/>
            <person name="Rose M."/>
            <person name="Hauf J."/>
            <person name="Berneiser S."/>
            <person name="Hempel S."/>
            <person name="Feldpausch M."/>
            <person name="Lamberth S."/>
            <person name="Villarroel R."/>
            <person name="Gielen J."/>
            <person name="Ardiles W."/>
            <person name="Bents O."/>
            <person name="Lemcke K."/>
            <person name="Kolesov G."/>
            <person name="Mayer K.F.X."/>
            <person name="Rudd S."/>
            <person name="Schoof H."/>
            <person name="Schueller C."/>
            <person name="Zaccaria P."/>
            <person name="Mewes H.-W."/>
            <person name="Bevan M."/>
            <person name="Fransz P.F."/>
        </authorList>
    </citation>
    <scope>NUCLEOTIDE SEQUENCE [LARGE SCALE GENOMIC DNA]</scope>
    <source>
        <strain>cv. Columbia</strain>
    </source>
</reference>
<reference key="3">
    <citation type="journal article" date="2017" name="Plant J.">
        <title>Araport11: a complete reannotation of the Arabidopsis thaliana reference genome.</title>
        <authorList>
            <person name="Cheng C.Y."/>
            <person name="Krishnakumar V."/>
            <person name="Chan A.P."/>
            <person name="Thibaud-Nissen F."/>
            <person name="Schobel S."/>
            <person name="Town C.D."/>
        </authorList>
    </citation>
    <scope>GENOME REANNOTATION</scope>
    <source>
        <strain>cv. Columbia</strain>
    </source>
</reference>
<reference key="4">
    <citation type="journal article" date="2014" name="Plant Cell Physiol.">
        <title>Emerging functions of nodulin-like proteins in non-nodulating plant species.</title>
        <authorList>
            <person name="Denance N."/>
            <person name="Szurek B."/>
            <person name="Noel L.D."/>
        </authorList>
    </citation>
    <scope>REVIEW ON NODULIN-LIKE PROTEINS</scope>
</reference>
<feature type="signal peptide" evidence="1">
    <location>
        <begin position="1"/>
        <end position="17"/>
    </location>
</feature>
<feature type="chain" id="PRO_5030169151" description="Early nodulin-like protein 21">
    <location>
        <begin position="18"/>
        <end position="116"/>
    </location>
</feature>
<feature type="propeptide" id="PRO_0000457750" description="Removed in mature form" evidence="1">
    <location>
        <begin position="117"/>
        <end position="145"/>
    </location>
</feature>
<feature type="domain" description="Phytocyanin" evidence="3">
    <location>
        <begin position="18"/>
        <end position="116"/>
    </location>
</feature>
<feature type="lipid moiety-binding region" description="GPI-anchor amidated serine" evidence="1">
    <location>
        <position position="116"/>
    </location>
</feature>
<feature type="glycosylation site" description="N-linked (GlcNAc...) asparagine" evidence="2">
    <location>
        <position position="30"/>
    </location>
</feature>
<feature type="glycosylation site" description="N-linked (GlcNAc...) asparagine" evidence="2">
    <location>
        <position position="71"/>
    </location>
</feature>
<feature type="disulfide bond" evidence="3">
    <location>
        <begin position="70"/>
        <end position="104"/>
    </location>
</feature>